<reference key="1">
    <citation type="journal article" date="2000" name="Science">
        <title>The genome sequence of Drosophila melanogaster.</title>
        <authorList>
            <person name="Adams M.D."/>
            <person name="Celniker S.E."/>
            <person name="Holt R.A."/>
            <person name="Evans C.A."/>
            <person name="Gocayne J.D."/>
            <person name="Amanatides P.G."/>
            <person name="Scherer S.E."/>
            <person name="Li P.W."/>
            <person name="Hoskins R.A."/>
            <person name="Galle R.F."/>
            <person name="George R.A."/>
            <person name="Lewis S.E."/>
            <person name="Richards S."/>
            <person name="Ashburner M."/>
            <person name="Henderson S.N."/>
            <person name="Sutton G.G."/>
            <person name="Wortman J.R."/>
            <person name="Yandell M.D."/>
            <person name="Zhang Q."/>
            <person name="Chen L.X."/>
            <person name="Brandon R.C."/>
            <person name="Rogers Y.-H.C."/>
            <person name="Blazej R.G."/>
            <person name="Champe M."/>
            <person name="Pfeiffer B.D."/>
            <person name="Wan K.H."/>
            <person name="Doyle C."/>
            <person name="Baxter E.G."/>
            <person name="Helt G."/>
            <person name="Nelson C.R."/>
            <person name="Miklos G.L.G."/>
            <person name="Abril J.F."/>
            <person name="Agbayani A."/>
            <person name="An H.-J."/>
            <person name="Andrews-Pfannkoch C."/>
            <person name="Baldwin D."/>
            <person name="Ballew R.M."/>
            <person name="Basu A."/>
            <person name="Baxendale J."/>
            <person name="Bayraktaroglu L."/>
            <person name="Beasley E.M."/>
            <person name="Beeson K.Y."/>
            <person name="Benos P.V."/>
            <person name="Berman B.P."/>
            <person name="Bhandari D."/>
            <person name="Bolshakov S."/>
            <person name="Borkova D."/>
            <person name="Botchan M.R."/>
            <person name="Bouck J."/>
            <person name="Brokstein P."/>
            <person name="Brottier P."/>
            <person name="Burtis K.C."/>
            <person name="Busam D.A."/>
            <person name="Butler H."/>
            <person name="Cadieu E."/>
            <person name="Center A."/>
            <person name="Chandra I."/>
            <person name="Cherry J.M."/>
            <person name="Cawley S."/>
            <person name="Dahlke C."/>
            <person name="Davenport L.B."/>
            <person name="Davies P."/>
            <person name="de Pablos B."/>
            <person name="Delcher A."/>
            <person name="Deng Z."/>
            <person name="Mays A.D."/>
            <person name="Dew I."/>
            <person name="Dietz S.M."/>
            <person name="Dodson K."/>
            <person name="Doup L.E."/>
            <person name="Downes M."/>
            <person name="Dugan-Rocha S."/>
            <person name="Dunkov B.C."/>
            <person name="Dunn P."/>
            <person name="Durbin K.J."/>
            <person name="Evangelista C.C."/>
            <person name="Ferraz C."/>
            <person name="Ferriera S."/>
            <person name="Fleischmann W."/>
            <person name="Fosler C."/>
            <person name="Gabrielian A.E."/>
            <person name="Garg N.S."/>
            <person name="Gelbart W.M."/>
            <person name="Glasser K."/>
            <person name="Glodek A."/>
            <person name="Gong F."/>
            <person name="Gorrell J.H."/>
            <person name="Gu Z."/>
            <person name="Guan P."/>
            <person name="Harris M."/>
            <person name="Harris N.L."/>
            <person name="Harvey D.A."/>
            <person name="Heiman T.J."/>
            <person name="Hernandez J.R."/>
            <person name="Houck J."/>
            <person name="Hostin D."/>
            <person name="Houston K.A."/>
            <person name="Howland T.J."/>
            <person name="Wei M.-H."/>
            <person name="Ibegwam C."/>
            <person name="Jalali M."/>
            <person name="Kalush F."/>
            <person name="Karpen G.H."/>
            <person name="Ke Z."/>
            <person name="Kennison J.A."/>
            <person name="Ketchum K.A."/>
            <person name="Kimmel B.E."/>
            <person name="Kodira C.D."/>
            <person name="Kraft C.L."/>
            <person name="Kravitz S."/>
            <person name="Kulp D."/>
            <person name="Lai Z."/>
            <person name="Lasko P."/>
            <person name="Lei Y."/>
            <person name="Levitsky A.A."/>
            <person name="Li J.H."/>
            <person name="Li Z."/>
            <person name="Liang Y."/>
            <person name="Lin X."/>
            <person name="Liu X."/>
            <person name="Mattei B."/>
            <person name="McIntosh T.C."/>
            <person name="McLeod M.P."/>
            <person name="McPherson D."/>
            <person name="Merkulov G."/>
            <person name="Milshina N.V."/>
            <person name="Mobarry C."/>
            <person name="Morris J."/>
            <person name="Moshrefi A."/>
            <person name="Mount S.M."/>
            <person name="Moy M."/>
            <person name="Murphy B."/>
            <person name="Murphy L."/>
            <person name="Muzny D.M."/>
            <person name="Nelson D.L."/>
            <person name="Nelson D.R."/>
            <person name="Nelson K.A."/>
            <person name="Nixon K."/>
            <person name="Nusskern D.R."/>
            <person name="Pacleb J.M."/>
            <person name="Palazzolo M."/>
            <person name="Pittman G.S."/>
            <person name="Pan S."/>
            <person name="Pollard J."/>
            <person name="Puri V."/>
            <person name="Reese M.G."/>
            <person name="Reinert K."/>
            <person name="Remington K."/>
            <person name="Saunders R.D.C."/>
            <person name="Scheeler F."/>
            <person name="Shen H."/>
            <person name="Shue B.C."/>
            <person name="Siden-Kiamos I."/>
            <person name="Simpson M."/>
            <person name="Skupski M.P."/>
            <person name="Smith T.J."/>
            <person name="Spier E."/>
            <person name="Spradling A.C."/>
            <person name="Stapleton M."/>
            <person name="Strong R."/>
            <person name="Sun E."/>
            <person name="Svirskas R."/>
            <person name="Tector C."/>
            <person name="Turner R."/>
            <person name="Venter E."/>
            <person name="Wang A.H."/>
            <person name="Wang X."/>
            <person name="Wang Z.-Y."/>
            <person name="Wassarman D.A."/>
            <person name="Weinstock G.M."/>
            <person name="Weissenbach J."/>
            <person name="Williams S.M."/>
            <person name="Woodage T."/>
            <person name="Worley K.C."/>
            <person name="Wu D."/>
            <person name="Yang S."/>
            <person name="Yao Q.A."/>
            <person name="Ye J."/>
            <person name="Yeh R.-F."/>
            <person name="Zaveri J.S."/>
            <person name="Zhan M."/>
            <person name="Zhang G."/>
            <person name="Zhao Q."/>
            <person name="Zheng L."/>
            <person name="Zheng X.H."/>
            <person name="Zhong F.N."/>
            <person name="Zhong W."/>
            <person name="Zhou X."/>
            <person name="Zhu S.C."/>
            <person name="Zhu X."/>
            <person name="Smith H.O."/>
            <person name="Gibbs R.A."/>
            <person name="Myers E.W."/>
            <person name="Rubin G.M."/>
            <person name="Venter J.C."/>
        </authorList>
    </citation>
    <scope>NUCLEOTIDE SEQUENCE [LARGE SCALE GENOMIC DNA]</scope>
    <source>
        <strain>Berkeley</strain>
    </source>
</reference>
<reference key="2">
    <citation type="journal article" date="2002" name="Genome Biol.">
        <title>Annotation of the Drosophila melanogaster euchromatic genome: a systematic review.</title>
        <authorList>
            <person name="Misra S."/>
            <person name="Crosby M.A."/>
            <person name="Mungall C.J."/>
            <person name="Matthews B.B."/>
            <person name="Campbell K.S."/>
            <person name="Hradecky P."/>
            <person name="Huang Y."/>
            <person name="Kaminker J.S."/>
            <person name="Millburn G.H."/>
            <person name="Prochnik S.E."/>
            <person name="Smith C.D."/>
            <person name="Tupy J.L."/>
            <person name="Whitfield E.J."/>
            <person name="Bayraktaroglu L."/>
            <person name="Berman B.P."/>
            <person name="Bettencourt B.R."/>
            <person name="Celniker S.E."/>
            <person name="de Grey A.D.N.J."/>
            <person name="Drysdale R.A."/>
            <person name="Harris N.L."/>
            <person name="Richter J."/>
            <person name="Russo S."/>
            <person name="Schroeder A.J."/>
            <person name="Shu S.Q."/>
            <person name="Stapleton M."/>
            <person name="Yamada C."/>
            <person name="Ashburner M."/>
            <person name="Gelbart W.M."/>
            <person name="Rubin G.M."/>
            <person name="Lewis S.E."/>
        </authorList>
    </citation>
    <scope>GENOME REANNOTATION</scope>
    <source>
        <strain>Berkeley</strain>
    </source>
</reference>
<reference key="3">
    <citation type="journal article" date="2002" name="Genome Biol.">
        <title>A Drosophila full-length cDNA resource.</title>
        <authorList>
            <person name="Stapleton M."/>
            <person name="Carlson J.W."/>
            <person name="Brokstein P."/>
            <person name="Yu C."/>
            <person name="Champe M."/>
            <person name="George R.A."/>
            <person name="Guarin H."/>
            <person name="Kronmiller B."/>
            <person name="Pacleb J.M."/>
            <person name="Park S."/>
            <person name="Wan K.H."/>
            <person name="Rubin G.M."/>
            <person name="Celniker S.E."/>
        </authorList>
    </citation>
    <scope>NUCLEOTIDE SEQUENCE [LARGE SCALE MRNA]</scope>
    <source>
        <strain>Berkeley</strain>
        <tissue>Embryo</tissue>
    </source>
</reference>
<comment type="subcellular location">
    <subcellularLocation>
        <location evidence="3">Membrane</location>
        <topology evidence="3">Multi-pass membrane protein</topology>
    </subcellularLocation>
</comment>
<comment type="similarity">
    <text evidence="3">Belongs to the DNAJC25 family.</text>
</comment>
<gene>
    <name type="ORF">CG7872</name>
</gene>
<keyword id="KW-0143">Chaperone</keyword>
<keyword id="KW-0175">Coiled coil</keyword>
<keyword id="KW-0472">Membrane</keyword>
<keyword id="KW-1185">Reference proteome</keyword>
<keyword id="KW-0812">Transmembrane</keyword>
<keyword id="KW-1133">Transmembrane helix</keyword>
<organism>
    <name type="scientific">Drosophila melanogaster</name>
    <name type="common">Fruit fly</name>
    <dbReference type="NCBI Taxonomy" id="7227"/>
    <lineage>
        <taxon>Eukaryota</taxon>
        <taxon>Metazoa</taxon>
        <taxon>Ecdysozoa</taxon>
        <taxon>Arthropoda</taxon>
        <taxon>Hexapoda</taxon>
        <taxon>Insecta</taxon>
        <taxon>Pterygota</taxon>
        <taxon>Neoptera</taxon>
        <taxon>Endopterygota</taxon>
        <taxon>Diptera</taxon>
        <taxon>Brachycera</taxon>
        <taxon>Muscomorpha</taxon>
        <taxon>Ephydroidea</taxon>
        <taxon>Drosophilidae</taxon>
        <taxon>Drosophila</taxon>
        <taxon>Sophophora</taxon>
    </lineage>
</organism>
<accession>Q9VXT2</accession>
<feature type="chain" id="PRO_0000348574" description="DnaJ homolog subfamily C member 25 homolog">
    <location>
        <begin position="1"/>
        <end position="333"/>
    </location>
</feature>
<feature type="transmembrane region" description="Helical" evidence="1">
    <location>
        <begin position="8"/>
        <end position="28"/>
    </location>
</feature>
<feature type="transmembrane region" description="Helical" evidence="1">
    <location>
        <begin position="123"/>
        <end position="143"/>
    </location>
</feature>
<feature type="transmembrane region" description="Helical" evidence="1">
    <location>
        <begin position="218"/>
        <end position="238"/>
    </location>
</feature>
<feature type="domain" description="J" evidence="2">
    <location>
        <begin position="31"/>
        <end position="99"/>
    </location>
</feature>
<feature type="coiled-coil region" evidence="1">
    <location>
        <begin position="158"/>
        <end position="208"/>
    </location>
</feature>
<protein>
    <recommendedName>
        <fullName>DnaJ homolog subfamily C member 25 homolog</fullName>
    </recommendedName>
</protein>
<name>DJC25_DROME</name>
<proteinExistence type="evidence at transcript level"/>
<dbReference type="EMBL" id="AE014298">
    <property type="protein sequence ID" value="AAF48476.1"/>
    <property type="molecule type" value="Genomic_DNA"/>
</dbReference>
<dbReference type="EMBL" id="AY058556">
    <property type="protein sequence ID" value="AAL13785.1"/>
    <property type="molecule type" value="mRNA"/>
</dbReference>
<dbReference type="RefSeq" id="NP_573044.1">
    <property type="nucleotide sequence ID" value="NM_132816.4"/>
</dbReference>
<dbReference type="SMR" id="Q9VXT2"/>
<dbReference type="FunCoup" id="Q9VXT2">
    <property type="interactions" value="1288"/>
</dbReference>
<dbReference type="STRING" id="7227.FBpp0073862"/>
<dbReference type="PaxDb" id="7227-FBpp0073862"/>
<dbReference type="DNASU" id="32493"/>
<dbReference type="EnsemblMetazoa" id="FBtr0074046">
    <property type="protein sequence ID" value="FBpp0073862"/>
    <property type="gene ID" value="FBgn0030658"/>
</dbReference>
<dbReference type="GeneID" id="32493"/>
<dbReference type="KEGG" id="dme:Dmel_CG7872"/>
<dbReference type="UCSC" id="CG7872-RA">
    <property type="organism name" value="d. melanogaster"/>
</dbReference>
<dbReference type="AGR" id="FB:FBgn0030658"/>
<dbReference type="FlyBase" id="FBgn0030658">
    <property type="gene designation" value="CG7872"/>
</dbReference>
<dbReference type="VEuPathDB" id="VectorBase:FBgn0030658"/>
<dbReference type="eggNOG" id="KOG0722">
    <property type="taxonomic scope" value="Eukaryota"/>
</dbReference>
<dbReference type="GeneTree" id="ENSGT00390000013355"/>
<dbReference type="HOGENOM" id="CLU_055735_0_0_1"/>
<dbReference type="InParanoid" id="Q9VXT2"/>
<dbReference type="OMA" id="WFWRYTV"/>
<dbReference type="OrthoDB" id="270167at2759"/>
<dbReference type="PhylomeDB" id="Q9VXT2"/>
<dbReference type="BioGRID-ORCS" id="32493">
    <property type="hits" value="0 hits in 3 CRISPR screens"/>
</dbReference>
<dbReference type="GenomeRNAi" id="32493"/>
<dbReference type="PRO" id="PR:Q9VXT2"/>
<dbReference type="Proteomes" id="UP000000803">
    <property type="component" value="Chromosome X"/>
</dbReference>
<dbReference type="Bgee" id="FBgn0030658">
    <property type="expression patterns" value="Expressed in oocyte and 95 other cell types or tissues"/>
</dbReference>
<dbReference type="GO" id="GO:0012505">
    <property type="term" value="C:endomembrane system"/>
    <property type="evidence" value="ECO:0007005"/>
    <property type="project" value="FlyBase"/>
</dbReference>
<dbReference type="GO" id="GO:0005789">
    <property type="term" value="C:endoplasmic reticulum membrane"/>
    <property type="evidence" value="ECO:0000318"/>
    <property type="project" value="GO_Central"/>
</dbReference>
<dbReference type="GO" id="GO:0006457">
    <property type="term" value="P:protein folding"/>
    <property type="evidence" value="ECO:0000318"/>
    <property type="project" value="GO_Central"/>
</dbReference>
<dbReference type="CDD" id="cd06257">
    <property type="entry name" value="DnaJ"/>
    <property type="match status" value="1"/>
</dbReference>
<dbReference type="FunFam" id="1.10.287.110:FF:000036">
    <property type="entry name" value="dnaJ homolog subfamily C member 25"/>
    <property type="match status" value="1"/>
</dbReference>
<dbReference type="Gene3D" id="1.10.287.110">
    <property type="entry name" value="DnaJ domain"/>
    <property type="match status" value="1"/>
</dbReference>
<dbReference type="InterPro" id="IPR001623">
    <property type="entry name" value="DnaJ_domain"/>
</dbReference>
<dbReference type="InterPro" id="IPR018253">
    <property type="entry name" value="DnaJ_domain_CS"/>
</dbReference>
<dbReference type="InterPro" id="IPR044632">
    <property type="entry name" value="DNAJC25-like"/>
</dbReference>
<dbReference type="InterPro" id="IPR036869">
    <property type="entry name" value="J_dom_sf"/>
</dbReference>
<dbReference type="PANTHER" id="PTHR44176">
    <property type="entry name" value="DNAJ HOMOLOG SUBFAMILY C MEMBER 25"/>
    <property type="match status" value="1"/>
</dbReference>
<dbReference type="PANTHER" id="PTHR44176:SF1">
    <property type="entry name" value="DNAJ HOMOLOG SUBFAMILY C MEMBER 25"/>
    <property type="match status" value="1"/>
</dbReference>
<dbReference type="Pfam" id="PF00226">
    <property type="entry name" value="DnaJ"/>
    <property type="match status" value="1"/>
</dbReference>
<dbReference type="PRINTS" id="PR00625">
    <property type="entry name" value="JDOMAIN"/>
</dbReference>
<dbReference type="SMART" id="SM00271">
    <property type="entry name" value="DnaJ"/>
    <property type="match status" value="1"/>
</dbReference>
<dbReference type="SUPFAM" id="SSF46565">
    <property type="entry name" value="Chaperone J-domain"/>
    <property type="match status" value="1"/>
</dbReference>
<dbReference type="PROSITE" id="PS00636">
    <property type="entry name" value="DNAJ_1"/>
    <property type="match status" value="1"/>
</dbReference>
<dbReference type="PROSITE" id="PS50076">
    <property type="entry name" value="DNAJ_2"/>
    <property type="match status" value="1"/>
</dbReference>
<sequence length="333" mass="39887">MRTHGLRLVLLALLPTMALGLLEGLYCGKENCYDVLGVTRESSKSEIGKAYRQLARRYHPDLHRGAEAKAAAETQFKLVATAYEILRDEESRTDYDYMLDNPDAYYAHYYRYYRRRVAPKVDVRVVIVVVLTIVSVIQYYSGWQRYDSAIKYFATVPKYRNQALEIARDEIQEKIQKKGKNRMSKNDQRDELERIIRRVIEEKMDVKGGYAKPTLWDVLWVQLIICPYTILSFIVWHAQWFWRYTVMKQPYGREQKLYLIRRHLGMGQHQFEAQEDKLIEEYLHLKLWKRENFVAWKAEQEEEMKKKLAENPRYKAYRRYMKNHGPGRITFED</sequence>
<evidence type="ECO:0000255" key="1"/>
<evidence type="ECO:0000255" key="2">
    <source>
        <dbReference type="PROSITE-ProRule" id="PRU00286"/>
    </source>
</evidence>
<evidence type="ECO:0000305" key="3"/>